<keyword id="KW-0067">ATP-binding</keyword>
<keyword id="KW-0173">Coenzyme A biosynthesis</keyword>
<keyword id="KW-0963">Cytoplasm</keyword>
<keyword id="KW-0547">Nucleotide-binding</keyword>
<keyword id="KW-0548">Nucleotidyltransferase</keyword>
<keyword id="KW-1185">Reference proteome</keyword>
<keyword id="KW-0808">Transferase</keyword>
<evidence type="ECO:0000255" key="1">
    <source>
        <dbReference type="HAMAP-Rule" id="MF_00647"/>
    </source>
</evidence>
<evidence type="ECO:0000305" key="2"/>
<sequence>MKRKYSLVAVGGTFDRFHKGHRRLLDEAFRVGETVMIGVTSDEFAAAKGEGIEPCSVRMKNLEEYLRDKDADYHVMRLDDPYGTTVTDEAFEAIVVSRETEPVAREINAIRRNRGFRELDIITIDMVNADDGIPISSTRIRRGEIDPMGHIIKRIRGALRRRRE</sequence>
<gene>
    <name evidence="1" type="primary">coaD</name>
    <name type="ordered locus">MTH_1896</name>
</gene>
<dbReference type="EC" id="2.7.7.3" evidence="1"/>
<dbReference type="EMBL" id="AE000666">
    <property type="protein sequence ID" value="AAB86356.1"/>
    <property type="status" value="ALT_INIT"/>
    <property type="molecule type" value="Genomic_DNA"/>
</dbReference>
<dbReference type="PIR" id="A69120">
    <property type="entry name" value="A69120"/>
</dbReference>
<dbReference type="RefSeq" id="WP_048061166.1">
    <property type="nucleotide sequence ID" value="NC_000916.1"/>
</dbReference>
<dbReference type="SMR" id="O27918"/>
<dbReference type="FunCoup" id="O27918">
    <property type="interactions" value="98"/>
</dbReference>
<dbReference type="STRING" id="187420.MTH_1896"/>
<dbReference type="PaxDb" id="187420-MTH_1896"/>
<dbReference type="EnsemblBacteria" id="AAB86356">
    <property type="protein sequence ID" value="AAB86356"/>
    <property type="gene ID" value="MTH_1896"/>
</dbReference>
<dbReference type="KEGG" id="mth:MTH_1896"/>
<dbReference type="PATRIC" id="fig|187420.15.peg.1847"/>
<dbReference type="HOGENOM" id="CLU_035272_5_0_2"/>
<dbReference type="InParanoid" id="O27918"/>
<dbReference type="UniPathway" id="UPA00241"/>
<dbReference type="Proteomes" id="UP000005223">
    <property type="component" value="Chromosome"/>
</dbReference>
<dbReference type="GO" id="GO:0005737">
    <property type="term" value="C:cytoplasm"/>
    <property type="evidence" value="ECO:0007669"/>
    <property type="project" value="UniProtKB-SubCell"/>
</dbReference>
<dbReference type="GO" id="GO:0005524">
    <property type="term" value="F:ATP binding"/>
    <property type="evidence" value="ECO:0007669"/>
    <property type="project" value="UniProtKB-KW"/>
</dbReference>
<dbReference type="GO" id="GO:0004595">
    <property type="term" value="F:pantetheine-phosphate adenylyltransferase activity"/>
    <property type="evidence" value="ECO:0007669"/>
    <property type="project" value="UniProtKB-UniRule"/>
</dbReference>
<dbReference type="GO" id="GO:0015937">
    <property type="term" value="P:coenzyme A biosynthetic process"/>
    <property type="evidence" value="ECO:0007669"/>
    <property type="project" value="UniProtKB-UniRule"/>
</dbReference>
<dbReference type="CDD" id="cd02164">
    <property type="entry name" value="PPAT_CoAS"/>
    <property type="match status" value="1"/>
</dbReference>
<dbReference type="Gene3D" id="3.40.50.620">
    <property type="entry name" value="HUPs"/>
    <property type="match status" value="1"/>
</dbReference>
<dbReference type="HAMAP" id="MF_00647">
    <property type="entry name" value="PPAT_arch"/>
    <property type="match status" value="1"/>
</dbReference>
<dbReference type="InterPro" id="IPR050385">
    <property type="entry name" value="Archaeal_FAD_synthase"/>
</dbReference>
<dbReference type="InterPro" id="IPR004821">
    <property type="entry name" value="Cyt_trans-like"/>
</dbReference>
<dbReference type="InterPro" id="IPR023540">
    <property type="entry name" value="PPAT_arch"/>
</dbReference>
<dbReference type="InterPro" id="IPR014729">
    <property type="entry name" value="Rossmann-like_a/b/a_fold"/>
</dbReference>
<dbReference type="NCBIfam" id="TIGR00125">
    <property type="entry name" value="cyt_tran_rel"/>
    <property type="match status" value="1"/>
</dbReference>
<dbReference type="NCBIfam" id="NF001985">
    <property type="entry name" value="PRK00777.1"/>
    <property type="match status" value="1"/>
</dbReference>
<dbReference type="PANTHER" id="PTHR43793">
    <property type="entry name" value="FAD SYNTHASE"/>
    <property type="match status" value="1"/>
</dbReference>
<dbReference type="PANTHER" id="PTHR43793:SF1">
    <property type="entry name" value="FAD SYNTHASE"/>
    <property type="match status" value="1"/>
</dbReference>
<dbReference type="Pfam" id="PF01467">
    <property type="entry name" value="CTP_transf_like"/>
    <property type="match status" value="1"/>
</dbReference>
<dbReference type="SUPFAM" id="SSF52374">
    <property type="entry name" value="Nucleotidylyl transferase"/>
    <property type="match status" value="1"/>
</dbReference>
<name>COAD_METTH</name>
<organism>
    <name type="scientific">Methanothermobacter thermautotrophicus (strain ATCC 29096 / DSM 1053 / JCM 10044 / NBRC 100330 / Delta H)</name>
    <name type="common">Methanobacterium thermoautotrophicum</name>
    <dbReference type="NCBI Taxonomy" id="187420"/>
    <lineage>
        <taxon>Archaea</taxon>
        <taxon>Methanobacteriati</taxon>
        <taxon>Methanobacteriota</taxon>
        <taxon>Methanomada group</taxon>
        <taxon>Methanobacteria</taxon>
        <taxon>Methanobacteriales</taxon>
        <taxon>Methanobacteriaceae</taxon>
        <taxon>Methanothermobacter</taxon>
    </lineage>
</organism>
<protein>
    <recommendedName>
        <fullName evidence="1">Phosphopantetheine adenylyltransferase</fullName>
        <ecNumber evidence="1">2.7.7.3</ecNumber>
    </recommendedName>
    <alternativeName>
        <fullName evidence="1">Dephospho-CoA pyrophosphorylase</fullName>
    </alternativeName>
    <alternativeName>
        <fullName evidence="1">Pantetheine-phosphate adenylyltransferase</fullName>
        <shortName evidence="1">PPAT</shortName>
    </alternativeName>
</protein>
<reference key="1">
    <citation type="journal article" date="1997" name="J. Bacteriol.">
        <title>Complete genome sequence of Methanobacterium thermoautotrophicum deltaH: functional analysis and comparative genomics.</title>
        <authorList>
            <person name="Smith D.R."/>
            <person name="Doucette-Stamm L.A."/>
            <person name="Deloughery C."/>
            <person name="Lee H.-M."/>
            <person name="Dubois J."/>
            <person name="Aldredge T."/>
            <person name="Bashirzadeh R."/>
            <person name="Blakely D."/>
            <person name="Cook R."/>
            <person name="Gilbert K."/>
            <person name="Harrison D."/>
            <person name="Hoang L."/>
            <person name="Keagle P."/>
            <person name="Lumm W."/>
            <person name="Pothier B."/>
            <person name="Qiu D."/>
            <person name="Spadafora R."/>
            <person name="Vicare R."/>
            <person name="Wang Y."/>
            <person name="Wierzbowski J."/>
            <person name="Gibson R."/>
            <person name="Jiwani N."/>
            <person name="Caruso A."/>
            <person name="Bush D."/>
            <person name="Safer H."/>
            <person name="Patwell D."/>
            <person name="Prabhakar S."/>
            <person name="McDougall S."/>
            <person name="Shimer G."/>
            <person name="Goyal A."/>
            <person name="Pietrovski S."/>
            <person name="Church G.M."/>
            <person name="Daniels C.J."/>
            <person name="Mao J.-I."/>
            <person name="Rice P."/>
            <person name="Noelling J."/>
            <person name="Reeve J.N."/>
        </authorList>
    </citation>
    <scope>NUCLEOTIDE SEQUENCE [LARGE SCALE GENOMIC DNA]</scope>
    <source>
        <strain>ATCC 29096 / DSM 1053 / JCM 10044 / NBRC 100330 / Delta H</strain>
    </source>
</reference>
<comment type="function">
    <text evidence="1">Reversibly transfers an adenylyl group from ATP to 4'-phosphopantetheine, yielding dephospho-CoA (dPCoA) and pyrophosphate.</text>
</comment>
<comment type="catalytic activity">
    <reaction evidence="1">
        <text>(R)-4'-phosphopantetheine + ATP + H(+) = 3'-dephospho-CoA + diphosphate</text>
        <dbReference type="Rhea" id="RHEA:19801"/>
        <dbReference type="ChEBI" id="CHEBI:15378"/>
        <dbReference type="ChEBI" id="CHEBI:30616"/>
        <dbReference type="ChEBI" id="CHEBI:33019"/>
        <dbReference type="ChEBI" id="CHEBI:57328"/>
        <dbReference type="ChEBI" id="CHEBI:61723"/>
        <dbReference type="EC" id="2.7.7.3"/>
    </reaction>
</comment>
<comment type="pathway">
    <text evidence="1">Cofactor biosynthesis; coenzyme A biosynthesis.</text>
</comment>
<comment type="subcellular location">
    <subcellularLocation>
        <location evidence="1">Cytoplasm</location>
    </subcellularLocation>
</comment>
<comment type="similarity">
    <text evidence="1">Belongs to the eukaryotic CoaD family.</text>
</comment>
<comment type="sequence caution" evidence="2">
    <conflict type="erroneous initiation">
        <sequence resource="EMBL-CDS" id="AAB86356"/>
    </conflict>
</comment>
<accession>O27918</accession>
<proteinExistence type="inferred from homology"/>
<feature type="chain" id="PRO_0000156323" description="Phosphopantetheine adenylyltransferase">
    <location>
        <begin position="1"/>
        <end position="164"/>
    </location>
</feature>